<organism>
    <name type="scientific">Petroselinum crispum</name>
    <name type="common">Parsley</name>
    <name type="synonym">Petroselinum hortense</name>
    <dbReference type="NCBI Taxonomy" id="4043"/>
    <lineage>
        <taxon>Eukaryota</taxon>
        <taxon>Viridiplantae</taxon>
        <taxon>Streptophyta</taxon>
        <taxon>Embryophyta</taxon>
        <taxon>Tracheophyta</taxon>
        <taxon>Spermatophyta</taxon>
        <taxon>Magnoliopsida</taxon>
        <taxon>eudicotyledons</taxon>
        <taxon>Gunneridae</taxon>
        <taxon>Pentapetalae</taxon>
        <taxon>asterids</taxon>
        <taxon>campanulids</taxon>
        <taxon>Apiales</taxon>
        <taxon>Apiaceae</taxon>
        <taxon>Apioideae</taxon>
        <taxon>apioid superclade</taxon>
        <taxon>Apieae</taxon>
        <taxon>Petroselinum</taxon>
    </lineage>
</organism>
<reference key="1">
    <citation type="journal article" date="1991" name="J. Biol. Chem.">
        <title>Molecular cloning, induction and taxonomic distribution of caffeoyl-CoA 3-O-methyltransferase, an enzyme involved in disease resistance.</title>
        <authorList>
            <person name="Schmitt D."/>
            <person name="Pakusch A.-E."/>
            <person name="Matern U."/>
        </authorList>
    </citation>
    <scope>NUCLEOTIDE SEQUENCE [MRNA]</scope>
</reference>
<reference key="2">
    <citation type="journal article" date="1997" name="Plant Mol. Biol.">
        <title>Structure of the parsley caffeoyl-CoA O-methyltransferase gene, harbouring a novel elicitor responsive cis-acting element.</title>
        <authorList>
            <person name="Grimmig B."/>
            <person name="Matern U."/>
        </authorList>
    </citation>
    <scope>NUCLEOTIDE SEQUENCE [GENOMIC DNA]</scope>
    <source>
        <tissue>Leaf</tissue>
    </source>
</reference>
<reference key="3">
    <citation type="journal article" date="1991" name="Plant Physiol.">
        <title>Elicitor-inducible caffeoyl-coenzyme A 3-O-methyltransferase from Petroselinum crispum cell suspensions.</title>
        <authorList>
            <person name="Pakusch A.-E."/>
            <person name="Matern U."/>
            <person name="Schiltz E."/>
        </authorList>
    </citation>
    <scope>PARTIAL PROTEIN SEQUENCE</scope>
</reference>
<accession>P28034</accession>
<protein>
    <recommendedName>
        <fullName>Caffeoyl-CoA O-methyltransferase</fullName>
        <ecNumber>2.1.1.104</ecNumber>
    </recommendedName>
    <alternativeName>
        <fullName>Trans-caffeoyl-CoA 3-O-methyltransferase</fullName>
        <shortName>CCoAMT</shortName>
        <shortName>CCoAOMT</shortName>
    </alternativeName>
</protein>
<evidence type="ECO:0000250" key="1">
    <source>
        <dbReference type="UniProtKB" id="Q40313"/>
    </source>
</evidence>
<evidence type="ECO:0000255" key="2">
    <source>
        <dbReference type="PROSITE-ProRule" id="PRU01019"/>
    </source>
</evidence>
<feature type="chain" id="PRO_0000165688" description="Caffeoyl-CoA O-methyltransferase">
    <location>
        <begin position="1"/>
        <end position="241"/>
    </location>
</feature>
<feature type="binding site" evidence="1">
    <location>
        <position position="15"/>
    </location>
    <ligand>
        <name>substrate</name>
    </ligand>
</feature>
<feature type="binding site" evidence="2">
    <location>
        <position position="57"/>
    </location>
    <ligand>
        <name>S-adenosyl-L-methionine</name>
        <dbReference type="ChEBI" id="CHEBI:59789"/>
    </ligand>
</feature>
<feature type="binding site" evidence="2">
    <location>
        <position position="79"/>
    </location>
    <ligand>
        <name>S-adenosyl-L-methionine</name>
        <dbReference type="ChEBI" id="CHEBI:59789"/>
    </ligand>
</feature>
<feature type="binding site" evidence="2">
    <location>
        <begin position="81"/>
        <end position="82"/>
    </location>
    <ligand>
        <name>S-adenosyl-L-methionine</name>
        <dbReference type="ChEBI" id="CHEBI:59789"/>
    </ligand>
</feature>
<feature type="binding site" evidence="2">
    <location>
        <position position="87"/>
    </location>
    <ligand>
        <name>S-adenosyl-L-methionine</name>
        <dbReference type="ChEBI" id="CHEBI:59789"/>
    </ligand>
</feature>
<feature type="binding site" evidence="2">
    <location>
        <position position="105"/>
    </location>
    <ligand>
        <name>S-adenosyl-L-methionine</name>
        <dbReference type="ChEBI" id="CHEBI:59789"/>
    </ligand>
</feature>
<feature type="binding site" evidence="2">
    <location>
        <position position="134"/>
    </location>
    <ligand>
        <name>S-adenosyl-L-methionine</name>
        <dbReference type="ChEBI" id="CHEBI:59789"/>
    </ligand>
</feature>
<feature type="binding site" evidence="2">
    <location>
        <position position="157"/>
    </location>
    <ligand>
        <name>a divalent metal cation</name>
        <dbReference type="ChEBI" id="CHEBI:60240"/>
    </ligand>
</feature>
<feature type="binding site" evidence="1">
    <location>
        <position position="157"/>
    </location>
    <ligand>
        <name>substrate</name>
    </ligand>
</feature>
<feature type="binding site" evidence="2">
    <location>
        <position position="159"/>
    </location>
    <ligand>
        <name>S-adenosyl-L-methionine</name>
        <dbReference type="ChEBI" id="CHEBI:59789"/>
    </ligand>
</feature>
<feature type="binding site" evidence="2">
    <location>
        <position position="183"/>
    </location>
    <ligand>
        <name>a divalent metal cation</name>
        <dbReference type="ChEBI" id="CHEBI:60240"/>
    </ligand>
</feature>
<feature type="binding site" evidence="2">
    <location>
        <position position="184"/>
    </location>
    <ligand>
        <name>a divalent metal cation</name>
        <dbReference type="ChEBI" id="CHEBI:60240"/>
    </ligand>
</feature>
<feature type="binding site" evidence="1">
    <location>
        <position position="188"/>
    </location>
    <ligand>
        <name>substrate</name>
    </ligand>
</feature>
<feature type="modified residue" description="Blocked amino end (Met)">
    <location>
        <position position="1"/>
    </location>
</feature>
<proteinExistence type="evidence at protein level"/>
<dbReference type="EC" id="2.1.1.104"/>
<dbReference type="EMBL" id="M69184">
    <property type="protein sequence ID" value="AAA33851.1"/>
    <property type="molecule type" value="mRNA"/>
</dbReference>
<dbReference type="EMBL" id="Z54183">
    <property type="protein sequence ID" value="CAA90894.1"/>
    <property type="molecule type" value="Genomic_DNA"/>
</dbReference>
<dbReference type="EMBL" id="Z33878">
    <property type="protein sequence ID" value="CAA83943.1"/>
    <property type="molecule type" value="Genomic_DNA"/>
</dbReference>
<dbReference type="PIR" id="S49342">
    <property type="entry name" value="A40975"/>
</dbReference>
<dbReference type="SMR" id="P28034"/>
<dbReference type="UniPathway" id="UPA00711"/>
<dbReference type="GO" id="GO:0042409">
    <property type="term" value="F:caffeoyl-CoA O-methyltransferase activity"/>
    <property type="evidence" value="ECO:0007669"/>
    <property type="project" value="UniProtKB-EC"/>
</dbReference>
<dbReference type="GO" id="GO:0046872">
    <property type="term" value="F:metal ion binding"/>
    <property type="evidence" value="ECO:0007669"/>
    <property type="project" value="UniProtKB-KW"/>
</dbReference>
<dbReference type="GO" id="GO:0009809">
    <property type="term" value="P:lignin biosynthetic process"/>
    <property type="evidence" value="ECO:0007669"/>
    <property type="project" value="UniProtKB-KW"/>
</dbReference>
<dbReference type="GO" id="GO:0032259">
    <property type="term" value="P:methylation"/>
    <property type="evidence" value="ECO:0007669"/>
    <property type="project" value="UniProtKB-KW"/>
</dbReference>
<dbReference type="FunFam" id="3.40.50.150:FF:000147">
    <property type="entry name" value="Caffeoyl-CoA O-methyltransferase 1"/>
    <property type="match status" value="1"/>
</dbReference>
<dbReference type="Gene3D" id="3.40.50.150">
    <property type="entry name" value="Vaccinia Virus protein VP39"/>
    <property type="match status" value="1"/>
</dbReference>
<dbReference type="InterPro" id="IPR050362">
    <property type="entry name" value="Cation-dep_OMT"/>
</dbReference>
<dbReference type="InterPro" id="IPR029063">
    <property type="entry name" value="SAM-dependent_MTases_sf"/>
</dbReference>
<dbReference type="InterPro" id="IPR002935">
    <property type="entry name" value="SAM_O-MeTrfase"/>
</dbReference>
<dbReference type="PANTHER" id="PTHR10509:SF74">
    <property type="entry name" value="CAFFEOYL-COA O-METHYLTRANSFERASE 2"/>
    <property type="match status" value="1"/>
</dbReference>
<dbReference type="PANTHER" id="PTHR10509">
    <property type="entry name" value="O-METHYLTRANSFERASE-RELATED"/>
    <property type="match status" value="1"/>
</dbReference>
<dbReference type="Pfam" id="PF01596">
    <property type="entry name" value="Methyltransf_3"/>
    <property type="match status" value="1"/>
</dbReference>
<dbReference type="SUPFAM" id="SSF53335">
    <property type="entry name" value="S-adenosyl-L-methionine-dependent methyltransferases"/>
    <property type="match status" value="1"/>
</dbReference>
<dbReference type="PROSITE" id="PS51682">
    <property type="entry name" value="SAM_OMT_I"/>
    <property type="match status" value="1"/>
</dbReference>
<keyword id="KW-0903">Direct protein sequencing</keyword>
<keyword id="KW-0438">Lignin biosynthesis</keyword>
<keyword id="KW-0479">Metal-binding</keyword>
<keyword id="KW-0489">Methyltransferase</keyword>
<keyword id="KW-0949">S-adenosyl-L-methionine</keyword>
<keyword id="KW-0808">Transferase</keyword>
<sequence length="241" mass="27096">MASNGESKHSEVGHKSLLQSDALYQYILETSVYPREPEAMKELREVTAKHPWNLMTTSADEGQFLNMLLKLINAKNTMEIGVYTGYSLLATALALPDDGKILAMDINRENYEIGLPIIEKAGVGHKIDFREGPALPVLDHMLEDGKYHGTFDFVFVDADKDNYINYHKRLIDLVKIGGLIGYDNTLWNGSVAQPADAPMRKYVRYYRDFVIELNKALAADPRIEICMLPVGDGVTLCRRIS</sequence>
<name>CAMT_PETCR</name>
<comment type="function">
    <text>Methylates caffeoyl-CoA to feruloyl-CoA and 5-hydroxyferuloyl-CoA to sinapoyl-CoA. Plays a role in the synthesis of feruloylated polysaccharides. Involved in the reinforcement of the plant cell wall. Also involved in the responding to wounding or pathogen challenge by the increased formation of cell wall-bound ferulic acid polymers.</text>
</comment>
<comment type="catalytic activity">
    <reaction>
        <text>(E)-caffeoyl-CoA + S-adenosyl-L-methionine = (E)-feruloyl-CoA + S-adenosyl-L-homocysteine + H(+)</text>
        <dbReference type="Rhea" id="RHEA:16925"/>
        <dbReference type="ChEBI" id="CHEBI:15378"/>
        <dbReference type="ChEBI" id="CHEBI:57856"/>
        <dbReference type="ChEBI" id="CHEBI:59789"/>
        <dbReference type="ChEBI" id="CHEBI:87136"/>
        <dbReference type="ChEBI" id="CHEBI:87305"/>
        <dbReference type="EC" id="2.1.1.104"/>
    </reaction>
</comment>
<comment type="cofactor">
    <cofactor evidence="1">
        <name>a divalent metal cation</name>
        <dbReference type="ChEBI" id="CHEBI:60240"/>
    </cofactor>
    <text evidence="1">Binds 1 divalent metal cation per subunit.</text>
</comment>
<comment type="pathway">
    <text>Aromatic compound metabolism; phenylpropanoid biosynthesis.</text>
</comment>
<comment type="subunit">
    <text>Homodimer.</text>
</comment>
<comment type="tissue specificity">
    <text>Roots and leaves.</text>
</comment>
<comment type="induction">
    <text>By infection, plant wounding, or elicitor treatment of cell cultures.</text>
</comment>
<comment type="similarity">
    <text evidence="2">Belongs to the class I-like SAM-binding methyltransferase superfamily. Cation-dependent O-methyltransferase family. CCoAMT subfamily.</text>
</comment>